<comment type="function">
    <text evidence="1">Catalyzes the synthesis of GMP from XMP.</text>
</comment>
<comment type="catalytic activity">
    <reaction evidence="1">
        <text>XMP + L-glutamine + ATP + H2O = GMP + L-glutamate + AMP + diphosphate + 2 H(+)</text>
        <dbReference type="Rhea" id="RHEA:11680"/>
        <dbReference type="ChEBI" id="CHEBI:15377"/>
        <dbReference type="ChEBI" id="CHEBI:15378"/>
        <dbReference type="ChEBI" id="CHEBI:29985"/>
        <dbReference type="ChEBI" id="CHEBI:30616"/>
        <dbReference type="ChEBI" id="CHEBI:33019"/>
        <dbReference type="ChEBI" id="CHEBI:57464"/>
        <dbReference type="ChEBI" id="CHEBI:58115"/>
        <dbReference type="ChEBI" id="CHEBI:58359"/>
        <dbReference type="ChEBI" id="CHEBI:456215"/>
        <dbReference type="EC" id="6.3.5.2"/>
    </reaction>
</comment>
<comment type="pathway">
    <text evidence="1">Purine metabolism; GMP biosynthesis; GMP from XMP (L-Gln route): step 1/1.</text>
</comment>
<comment type="subunit">
    <text evidence="1">Homodimer.</text>
</comment>
<sequence length="525" mass="58084">MSDIHEHKILILDFGSQYTQLIARRIREIGVYCELWAWDVTEAQIREFAPNGIILAGGPESVTADNSPRAPEYVFNAGVPVLGICYGMQTMSEQLGGKVIQGVGEGEFGYAQIEMLAESALFKGIEDAVSSDGKSLLDVWMSHGDKVSAIPAGFVAVAKTDTCPFAAMSCEEKRFYGVQFHPEVTHTRQGMRMLSHFALDICGCAANWKPSSIIEDAIERLKKQVGDDEVILGLSGGVDSSVVAMLLHRAIGKKLTCVFVDNGLLRLNEAKQVMEMFGDHFGLNIVHVDAENRFLDALKGEADPEAKRKIIGRVFVEIFDEEAKKCVNAKWLAQGTIYPDVIESAGSATGKAHVIKSHHNVGGLPDDMELGLVEPLRELFKDEVRKIGLELGLPYNMLYRHPFPGPGLGVRVLGEVKKEYCDLLRRADAIFIEELHKADLYNKVSQAFTVFLPVRSVGVMGDGRKYDWVVSLRAVETIDFMTAHWAHLPYDFLGRVSNRIINEVDGISRVVYDISGKPPATIEWE</sequence>
<protein>
    <recommendedName>
        <fullName evidence="1">GMP synthase [glutamine-hydrolyzing]</fullName>
        <ecNumber evidence="1">6.3.5.2</ecNumber>
    </recommendedName>
    <alternativeName>
        <fullName evidence="1">GMP synthetase</fullName>
    </alternativeName>
    <alternativeName>
        <fullName evidence="1">Glutamine amidotransferase</fullName>
    </alternativeName>
</protein>
<name>GUAA_SHEON</name>
<organism>
    <name type="scientific">Shewanella oneidensis (strain ATCC 700550 / JCM 31522 / CIP 106686 / LMG 19005 / NCIMB 14063 / MR-1)</name>
    <dbReference type="NCBI Taxonomy" id="211586"/>
    <lineage>
        <taxon>Bacteria</taxon>
        <taxon>Pseudomonadati</taxon>
        <taxon>Pseudomonadota</taxon>
        <taxon>Gammaproteobacteria</taxon>
        <taxon>Alteromonadales</taxon>
        <taxon>Shewanellaceae</taxon>
        <taxon>Shewanella</taxon>
    </lineage>
</organism>
<keyword id="KW-0067">ATP-binding</keyword>
<keyword id="KW-0315">Glutamine amidotransferase</keyword>
<keyword id="KW-0332">GMP biosynthesis</keyword>
<keyword id="KW-0436">Ligase</keyword>
<keyword id="KW-0547">Nucleotide-binding</keyword>
<keyword id="KW-0658">Purine biosynthesis</keyword>
<keyword id="KW-1185">Reference proteome</keyword>
<dbReference type="EC" id="6.3.5.2" evidence="1"/>
<dbReference type="EMBL" id="AE014299">
    <property type="protein sequence ID" value="AAN56290.1"/>
    <property type="molecule type" value="Genomic_DNA"/>
</dbReference>
<dbReference type="RefSeq" id="NP_718846.1">
    <property type="nucleotide sequence ID" value="NC_004347.2"/>
</dbReference>
<dbReference type="RefSeq" id="WP_011073171.1">
    <property type="nucleotide sequence ID" value="NC_004347.2"/>
</dbReference>
<dbReference type="SMR" id="Q8EC52"/>
<dbReference type="STRING" id="211586.SO_3292"/>
<dbReference type="PaxDb" id="211586-SO_3292"/>
<dbReference type="KEGG" id="son:SO_3292"/>
<dbReference type="PATRIC" id="fig|211586.12.peg.3197"/>
<dbReference type="eggNOG" id="COG0518">
    <property type="taxonomic scope" value="Bacteria"/>
</dbReference>
<dbReference type="eggNOG" id="COG0519">
    <property type="taxonomic scope" value="Bacteria"/>
</dbReference>
<dbReference type="HOGENOM" id="CLU_014340_0_5_6"/>
<dbReference type="OrthoDB" id="9802219at2"/>
<dbReference type="PhylomeDB" id="Q8EC52"/>
<dbReference type="BioCyc" id="SONE211586:G1GMP-3067-MONOMER"/>
<dbReference type="UniPathway" id="UPA00189">
    <property type="reaction ID" value="UER00296"/>
</dbReference>
<dbReference type="Proteomes" id="UP000008186">
    <property type="component" value="Chromosome"/>
</dbReference>
<dbReference type="GO" id="GO:0005829">
    <property type="term" value="C:cytosol"/>
    <property type="evidence" value="ECO:0000318"/>
    <property type="project" value="GO_Central"/>
</dbReference>
<dbReference type="GO" id="GO:0005524">
    <property type="term" value="F:ATP binding"/>
    <property type="evidence" value="ECO:0007669"/>
    <property type="project" value="UniProtKB-UniRule"/>
</dbReference>
<dbReference type="GO" id="GO:0003921">
    <property type="term" value="F:GMP synthase activity"/>
    <property type="evidence" value="ECO:0000318"/>
    <property type="project" value="GO_Central"/>
</dbReference>
<dbReference type="GO" id="GO:0006177">
    <property type="term" value="P:GMP biosynthetic process"/>
    <property type="evidence" value="ECO:0000318"/>
    <property type="project" value="GO_Central"/>
</dbReference>
<dbReference type="CDD" id="cd01742">
    <property type="entry name" value="GATase1_GMP_Synthase"/>
    <property type="match status" value="1"/>
</dbReference>
<dbReference type="CDD" id="cd01997">
    <property type="entry name" value="GMP_synthase_C"/>
    <property type="match status" value="1"/>
</dbReference>
<dbReference type="FunFam" id="3.30.300.10:FF:000002">
    <property type="entry name" value="GMP synthase [glutamine-hydrolyzing]"/>
    <property type="match status" value="1"/>
</dbReference>
<dbReference type="FunFam" id="3.40.50.620:FF:000001">
    <property type="entry name" value="GMP synthase [glutamine-hydrolyzing]"/>
    <property type="match status" value="1"/>
</dbReference>
<dbReference type="FunFam" id="3.40.50.880:FF:000001">
    <property type="entry name" value="GMP synthase [glutamine-hydrolyzing]"/>
    <property type="match status" value="1"/>
</dbReference>
<dbReference type="Gene3D" id="3.30.300.10">
    <property type="match status" value="1"/>
</dbReference>
<dbReference type="Gene3D" id="3.40.50.880">
    <property type="match status" value="1"/>
</dbReference>
<dbReference type="Gene3D" id="3.40.50.620">
    <property type="entry name" value="HUPs"/>
    <property type="match status" value="1"/>
</dbReference>
<dbReference type="HAMAP" id="MF_00344">
    <property type="entry name" value="GMP_synthase"/>
    <property type="match status" value="1"/>
</dbReference>
<dbReference type="InterPro" id="IPR029062">
    <property type="entry name" value="Class_I_gatase-like"/>
</dbReference>
<dbReference type="InterPro" id="IPR017926">
    <property type="entry name" value="GATASE"/>
</dbReference>
<dbReference type="InterPro" id="IPR001674">
    <property type="entry name" value="GMP_synth_C"/>
</dbReference>
<dbReference type="InterPro" id="IPR004739">
    <property type="entry name" value="GMP_synth_GATase"/>
</dbReference>
<dbReference type="InterPro" id="IPR022955">
    <property type="entry name" value="GMP_synthase"/>
</dbReference>
<dbReference type="InterPro" id="IPR025777">
    <property type="entry name" value="GMPS_ATP_PPase_dom"/>
</dbReference>
<dbReference type="InterPro" id="IPR022310">
    <property type="entry name" value="NAD/GMP_synthase"/>
</dbReference>
<dbReference type="InterPro" id="IPR014729">
    <property type="entry name" value="Rossmann-like_a/b/a_fold"/>
</dbReference>
<dbReference type="NCBIfam" id="TIGR00884">
    <property type="entry name" value="guaA_Cterm"/>
    <property type="match status" value="1"/>
</dbReference>
<dbReference type="NCBIfam" id="TIGR00888">
    <property type="entry name" value="guaA_Nterm"/>
    <property type="match status" value="1"/>
</dbReference>
<dbReference type="NCBIfam" id="NF000848">
    <property type="entry name" value="PRK00074.1"/>
    <property type="match status" value="1"/>
</dbReference>
<dbReference type="PANTHER" id="PTHR11922:SF2">
    <property type="entry name" value="GMP SYNTHASE [GLUTAMINE-HYDROLYZING]"/>
    <property type="match status" value="1"/>
</dbReference>
<dbReference type="PANTHER" id="PTHR11922">
    <property type="entry name" value="GMP SYNTHASE-RELATED"/>
    <property type="match status" value="1"/>
</dbReference>
<dbReference type="Pfam" id="PF00117">
    <property type="entry name" value="GATase"/>
    <property type="match status" value="1"/>
</dbReference>
<dbReference type="Pfam" id="PF00958">
    <property type="entry name" value="GMP_synt_C"/>
    <property type="match status" value="1"/>
</dbReference>
<dbReference type="Pfam" id="PF02540">
    <property type="entry name" value="NAD_synthase"/>
    <property type="match status" value="1"/>
</dbReference>
<dbReference type="PRINTS" id="PR00097">
    <property type="entry name" value="ANTSNTHASEII"/>
</dbReference>
<dbReference type="PRINTS" id="PR00099">
    <property type="entry name" value="CPSGATASE"/>
</dbReference>
<dbReference type="PRINTS" id="PR00096">
    <property type="entry name" value="GATASE"/>
</dbReference>
<dbReference type="SUPFAM" id="SSF52402">
    <property type="entry name" value="Adenine nucleotide alpha hydrolases-like"/>
    <property type="match status" value="1"/>
</dbReference>
<dbReference type="SUPFAM" id="SSF52317">
    <property type="entry name" value="Class I glutamine amidotransferase-like"/>
    <property type="match status" value="1"/>
</dbReference>
<dbReference type="SUPFAM" id="SSF54810">
    <property type="entry name" value="GMP synthetase C-terminal dimerisation domain"/>
    <property type="match status" value="1"/>
</dbReference>
<dbReference type="PROSITE" id="PS51273">
    <property type="entry name" value="GATASE_TYPE_1"/>
    <property type="match status" value="1"/>
</dbReference>
<dbReference type="PROSITE" id="PS51553">
    <property type="entry name" value="GMPS_ATP_PPASE"/>
    <property type="match status" value="1"/>
</dbReference>
<proteinExistence type="inferred from homology"/>
<accession>Q8EC52</accession>
<feature type="chain" id="PRO_0000140172" description="GMP synthase [glutamine-hydrolyzing]">
    <location>
        <begin position="1"/>
        <end position="525"/>
    </location>
</feature>
<feature type="domain" description="Glutamine amidotransferase type-1" evidence="1">
    <location>
        <begin position="8"/>
        <end position="207"/>
    </location>
</feature>
<feature type="domain" description="GMPS ATP-PPase" evidence="1">
    <location>
        <begin position="208"/>
        <end position="400"/>
    </location>
</feature>
<feature type="active site" description="Nucleophile" evidence="1">
    <location>
        <position position="85"/>
    </location>
</feature>
<feature type="active site" evidence="1">
    <location>
        <position position="181"/>
    </location>
</feature>
<feature type="active site" evidence="1">
    <location>
        <position position="183"/>
    </location>
</feature>
<feature type="binding site" evidence="1">
    <location>
        <begin position="235"/>
        <end position="241"/>
    </location>
    <ligand>
        <name>ATP</name>
        <dbReference type="ChEBI" id="CHEBI:30616"/>
    </ligand>
</feature>
<gene>
    <name evidence="1" type="primary">guaA</name>
    <name type="ordered locus">SO_3292</name>
</gene>
<evidence type="ECO:0000255" key="1">
    <source>
        <dbReference type="HAMAP-Rule" id="MF_00344"/>
    </source>
</evidence>
<reference key="1">
    <citation type="journal article" date="2002" name="Nat. Biotechnol.">
        <title>Genome sequence of the dissimilatory metal ion-reducing bacterium Shewanella oneidensis.</title>
        <authorList>
            <person name="Heidelberg J.F."/>
            <person name="Paulsen I.T."/>
            <person name="Nelson K.E."/>
            <person name="Gaidos E.J."/>
            <person name="Nelson W.C."/>
            <person name="Read T.D."/>
            <person name="Eisen J.A."/>
            <person name="Seshadri R."/>
            <person name="Ward N.L."/>
            <person name="Methe B.A."/>
            <person name="Clayton R.A."/>
            <person name="Meyer T."/>
            <person name="Tsapin A."/>
            <person name="Scott J."/>
            <person name="Beanan M.J."/>
            <person name="Brinkac L.M."/>
            <person name="Daugherty S.C."/>
            <person name="DeBoy R.T."/>
            <person name="Dodson R.J."/>
            <person name="Durkin A.S."/>
            <person name="Haft D.H."/>
            <person name="Kolonay J.F."/>
            <person name="Madupu R."/>
            <person name="Peterson J.D."/>
            <person name="Umayam L.A."/>
            <person name="White O."/>
            <person name="Wolf A.M."/>
            <person name="Vamathevan J.J."/>
            <person name="Weidman J.F."/>
            <person name="Impraim M."/>
            <person name="Lee K."/>
            <person name="Berry K.J."/>
            <person name="Lee C."/>
            <person name="Mueller J."/>
            <person name="Khouri H.M."/>
            <person name="Gill J."/>
            <person name="Utterback T.R."/>
            <person name="McDonald L.A."/>
            <person name="Feldblyum T.V."/>
            <person name="Smith H.O."/>
            <person name="Venter J.C."/>
            <person name="Nealson K.H."/>
            <person name="Fraser C.M."/>
        </authorList>
    </citation>
    <scope>NUCLEOTIDE SEQUENCE [LARGE SCALE GENOMIC DNA]</scope>
    <source>
        <strain>ATCC 700550 / JCM 31522 / CIP 106686 / LMG 19005 / NCIMB 14063 / MR-1</strain>
    </source>
</reference>